<reference key="1">
    <citation type="submission" date="2007-05" db="EMBL/GenBank/DDBJ databases">
        <title>Complete sequence of chromosome of Psychrobacter sp. PRwf-1.</title>
        <authorList>
            <consortium name="US DOE Joint Genome Institute"/>
            <person name="Copeland A."/>
            <person name="Lucas S."/>
            <person name="Lapidus A."/>
            <person name="Barry K."/>
            <person name="Detter J.C."/>
            <person name="Glavina del Rio T."/>
            <person name="Hammon N."/>
            <person name="Israni S."/>
            <person name="Dalin E."/>
            <person name="Tice H."/>
            <person name="Pitluck S."/>
            <person name="Chain P."/>
            <person name="Malfatti S."/>
            <person name="Shin M."/>
            <person name="Vergez L."/>
            <person name="Schmutz J."/>
            <person name="Larimer F."/>
            <person name="Land M."/>
            <person name="Hauser L."/>
            <person name="Kyrpides N."/>
            <person name="Kim E."/>
            <person name="Tiedje J."/>
            <person name="Richardson P."/>
        </authorList>
    </citation>
    <scope>NUCLEOTIDE SEQUENCE [LARGE SCALE GENOMIC DNA]</scope>
    <source>
        <strain>PRwf-1</strain>
    </source>
</reference>
<name>TTCA_PSYWF</name>
<keyword id="KW-0004">4Fe-4S</keyword>
<keyword id="KW-0067">ATP-binding</keyword>
<keyword id="KW-0963">Cytoplasm</keyword>
<keyword id="KW-0408">Iron</keyword>
<keyword id="KW-0411">Iron-sulfur</keyword>
<keyword id="KW-0460">Magnesium</keyword>
<keyword id="KW-0479">Metal-binding</keyword>
<keyword id="KW-0547">Nucleotide-binding</keyword>
<keyword id="KW-0694">RNA-binding</keyword>
<keyword id="KW-0808">Transferase</keyword>
<keyword id="KW-0819">tRNA processing</keyword>
<keyword id="KW-0820">tRNA-binding</keyword>
<dbReference type="EC" id="2.8.1.-" evidence="1"/>
<dbReference type="EMBL" id="CP000713">
    <property type="protein sequence ID" value="ABQ94690.1"/>
    <property type="molecule type" value="Genomic_DNA"/>
</dbReference>
<dbReference type="SMR" id="A5WG99"/>
<dbReference type="STRING" id="349106.PsycPRwf_1750"/>
<dbReference type="KEGG" id="prw:PsycPRwf_1750"/>
<dbReference type="eggNOG" id="COG0037">
    <property type="taxonomic scope" value="Bacteria"/>
</dbReference>
<dbReference type="HOGENOM" id="CLU_026481_3_0_6"/>
<dbReference type="GO" id="GO:0005737">
    <property type="term" value="C:cytoplasm"/>
    <property type="evidence" value="ECO:0007669"/>
    <property type="project" value="UniProtKB-SubCell"/>
</dbReference>
<dbReference type="GO" id="GO:0051539">
    <property type="term" value="F:4 iron, 4 sulfur cluster binding"/>
    <property type="evidence" value="ECO:0007669"/>
    <property type="project" value="UniProtKB-UniRule"/>
</dbReference>
<dbReference type="GO" id="GO:0005524">
    <property type="term" value="F:ATP binding"/>
    <property type="evidence" value="ECO:0007669"/>
    <property type="project" value="UniProtKB-UniRule"/>
</dbReference>
<dbReference type="GO" id="GO:0000287">
    <property type="term" value="F:magnesium ion binding"/>
    <property type="evidence" value="ECO:0007669"/>
    <property type="project" value="UniProtKB-UniRule"/>
</dbReference>
<dbReference type="GO" id="GO:0016783">
    <property type="term" value="F:sulfurtransferase activity"/>
    <property type="evidence" value="ECO:0007669"/>
    <property type="project" value="UniProtKB-UniRule"/>
</dbReference>
<dbReference type="GO" id="GO:0000049">
    <property type="term" value="F:tRNA binding"/>
    <property type="evidence" value="ECO:0007669"/>
    <property type="project" value="UniProtKB-KW"/>
</dbReference>
<dbReference type="GO" id="GO:0034227">
    <property type="term" value="P:tRNA thio-modification"/>
    <property type="evidence" value="ECO:0007669"/>
    <property type="project" value="UniProtKB-UniRule"/>
</dbReference>
<dbReference type="CDD" id="cd24138">
    <property type="entry name" value="TtcA-like"/>
    <property type="match status" value="1"/>
</dbReference>
<dbReference type="Gene3D" id="3.40.50.620">
    <property type="entry name" value="HUPs"/>
    <property type="match status" value="1"/>
</dbReference>
<dbReference type="HAMAP" id="MF_01850">
    <property type="entry name" value="TtcA"/>
    <property type="match status" value="1"/>
</dbReference>
<dbReference type="InterPro" id="IPR014729">
    <property type="entry name" value="Rossmann-like_a/b/a_fold"/>
</dbReference>
<dbReference type="InterPro" id="IPR011063">
    <property type="entry name" value="TilS/TtcA_N"/>
</dbReference>
<dbReference type="InterPro" id="IPR012089">
    <property type="entry name" value="tRNA_Cyd_32_2_STrfase"/>
</dbReference>
<dbReference type="NCBIfam" id="NF007972">
    <property type="entry name" value="PRK10696.1"/>
    <property type="match status" value="1"/>
</dbReference>
<dbReference type="PANTHER" id="PTHR43686:SF1">
    <property type="entry name" value="AMINOTRAN_5 DOMAIN-CONTAINING PROTEIN"/>
    <property type="match status" value="1"/>
</dbReference>
<dbReference type="PANTHER" id="PTHR43686">
    <property type="entry name" value="SULFURTRANSFERASE-RELATED"/>
    <property type="match status" value="1"/>
</dbReference>
<dbReference type="Pfam" id="PF01171">
    <property type="entry name" value="ATP_bind_3"/>
    <property type="match status" value="1"/>
</dbReference>
<dbReference type="SUPFAM" id="SSF52402">
    <property type="entry name" value="Adenine nucleotide alpha hydrolases-like"/>
    <property type="match status" value="1"/>
</dbReference>
<sequence length="368" mass="41620">MQTNFSQPQTFNPADITRNVIDNNQDDMVDSLDSDEEDLDLDLDLELSDEQEIAHKGVKSARFKKLQKKLRKQVSHAIRDFNMIEDGDVVMVCVSGGKDSYTLLDILLFLKRIAPINFDVVAVNLDQKQPGYPEEVLPNYLQQQGIPHYILEKDTYSVVKSVVPEGKTYCSACSRLRRGSLYGFAKQIGATKIALGHHRDDILATFFLNLFHGGSLKAMPPKLLSDDKQNVLIRPLAYVEEKDIIKYARYKEFPIIPCNLCGSQENLQRAMINDMLRQWDDAHPQRLASIFKAMQNVAPSQLADRELFDFESLTLQRDDSKRDFEGHNIQVGVANELAEIGLPTQPDIKPFESATAAKKIPTINPIID</sequence>
<feature type="chain" id="PRO_0000348808" description="tRNA-cytidine(32) 2-sulfurtransferase">
    <location>
        <begin position="1"/>
        <end position="368"/>
    </location>
</feature>
<feature type="short sequence motif" description="PP-loop motif" evidence="1">
    <location>
        <begin position="95"/>
        <end position="100"/>
    </location>
</feature>
<feature type="binding site" evidence="1">
    <location>
        <position position="170"/>
    </location>
    <ligand>
        <name>[4Fe-4S] cluster</name>
        <dbReference type="ChEBI" id="CHEBI:49883"/>
    </ligand>
</feature>
<feature type="binding site" evidence="1">
    <location>
        <position position="173"/>
    </location>
    <ligand>
        <name>[4Fe-4S] cluster</name>
        <dbReference type="ChEBI" id="CHEBI:49883"/>
    </ligand>
</feature>
<feature type="binding site" evidence="1">
    <location>
        <position position="261"/>
    </location>
    <ligand>
        <name>[4Fe-4S] cluster</name>
        <dbReference type="ChEBI" id="CHEBI:49883"/>
    </ligand>
</feature>
<proteinExistence type="inferred from homology"/>
<evidence type="ECO:0000255" key="1">
    <source>
        <dbReference type="HAMAP-Rule" id="MF_01850"/>
    </source>
</evidence>
<comment type="function">
    <text evidence="1">Catalyzes the ATP-dependent 2-thiolation of cytidine in position 32 of tRNA, to form 2-thiocytidine (s(2)C32). The sulfur atoms are provided by the cysteine/cysteine desulfurase (IscS) system.</text>
</comment>
<comment type="catalytic activity">
    <reaction evidence="1">
        <text>cytidine(32) in tRNA + S-sulfanyl-L-cysteinyl-[cysteine desulfurase] + AH2 + ATP = 2-thiocytidine(32) in tRNA + L-cysteinyl-[cysteine desulfurase] + A + AMP + diphosphate + H(+)</text>
        <dbReference type="Rhea" id="RHEA:57048"/>
        <dbReference type="Rhea" id="RHEA-COMP:10288"/>
        <dbReference type="Rhea" id="RHEA-COMP:12157"/>
        <dbReference type="Rhea" id="RHEA-COMP:12158"/>
        <dbReference type="Rhea" id="RHEA-COMP:14821"/>
        <dbReference type="ChEBI" id="CHEBI:13193"/>
        <dbReference type="ChEBI" id="CHEBI:15378"/>
        <dbReference type="ChEBI" id="CHEBI:17499"/>
        <dbReference type="ChEBI" id="CHEBI:29950"/>
        <dbReference type="ChEBI" id="CHEBI:30616"/>
        <dbReference type="ChEBI" id="CHEBI:33019"/>
        <dbReference type="ChEBI" id="CHEBI:61963"/>
        <dbReference type="ChEBI" id="CHEBI:82748"/>
        <dbReference type="ChEBI" id="CHEBI:141453"/>
        <dbReference type="ChEBI" id="CHEBI:456215"/>
    </reaction>
    <physiologicalReaction direction="left-to-right" evidence="1">
        <dbReference type="Rhea" id="RHEA:57049"/>
    </physiologicalReaction>
</comment>
<comment type="cofactor">
    <cofactor evidence="1">
        <name>Mg(2+)</name>
        <dbReference type="ChEBI" id="CHEBI:18420"/>
    </cofactor>
</comment>
<comment type="cofactor">
    <cofactor evidence="1">
        <name>[4Fe-4S] cluster</name>
        <dbReference type="ChEBI" id="CHEBI:49883"/>
    </cofactor>
    <text evidence="1">Binds 1 [4Fe-4S] cluster per subunit. The cluster is chelated by three Cys residues, the fourth Fe has a free coordination site that may bind a sulfur atom transferred from the persulfide of IscS.</text>
</comment>
<comment type="pathway">
    <text evidence="1">tRNA modification.</text>
</comment>
<comment type="subunit">
    <text evidence="1">Homodimer.</text>
</comment>
<comment type="subcellular location">
    <subcellularLocation>
        <location evidence="1">Cytoplasm</location>
    </subcellularLocation>
</comment>
<comment type="miscellaneous">
    <text evidence="1">The thiolation reaction likely consists of two steps: a first activation step by ATP to form an adenylated intermediate of the target base of tRNA, and a second nucleophilic substitution step of the sulfur (S) atom supplied by the hydrosulfide attached to the Fe-S cluster.</text>
</comment>
<comment type="similarity">
    <text evidence="1">Belongs to the TtcA family.</text>
</comment>
<organism>
    <name type="scientific">Psychrobacter sp. (strain PRwf-1)</name>
    <dbReference type="NCBI Taxonomy" id="349106"/>
    <lineage>
        <taxon>Bacteria</taxon>
        <taxon>Pseudomonadati</taxon>
        <taxon>Pseudomonadota</taxon>
        <taxon>Gammaproteobacteria</taxon>
        <taxon>Moraxellales</taxon>
        <taxon>Moraxellaceae</taxon>
        <taxon>Psychrobacter</taxon>
    </lineage>
</organism>
<protein>
    <recommendedName>
        <fullName evidence="1">tRNA-cytidine(32) 2-sulfurtransferase</fullName>
        <ecNumber evidence="1">2.8.1.-</ecNumber>
    </recommendedName>
    <alternativeName>
        <fullName evidence="1">Two-thiocytidine biosynthesis protein A</fullName>
    </alternativeName>
    <alternativeName>
        <fullName evidence="1">tRNA 2-thiocytidine biosynthesis protein TtcA</fullName>
    </alternativeName>
</protein>
<gene>
    <name evidence="1" type="primary">ttcA</name>
    <name type="ordered locus">PsycPRwf_1750</name>
</gene>
<accession>A5WG99</accession>